<dbReference type="EMBL" id="AF395845">
    <property type="protein sequence ID" value="AAK73126.1"/>
    <property type="molecule type" value="mRNA"/>
</dbReference>
<dbReference type="EMBL" id="AF523834">
    <property type="protein sequence ID" value="AAM77915.1"/>
    <property type="molecule type" value="mRNA"/>
</dbReference>
<dbReference type="EMBL" id="AL591562">
    <property type="protein sequence ID" value="CAC39140.1"/>
    <property type="molecule type" value="mRNA"/>
</dbReference>
<dbReference type="EMBL" id="AL008726">
    <property type="status" value="NOT_ANNOTATED_CDS"/>
    <property type="molecule type" value="Genomic_DNA"/>
</dbReference>
<dbReference type="EMBL" id="BC019823">
    <property type="protein sequence ID" value="AAH19823.1"/>
    <property type="molecule type" value="mRNA"/>
</dbReference>
<dbReference type="CCDS" id="CCDS13376.1">
    <molecule id="Q969T3-2"/>
</dbReference>
<dbReference type="CCDS" id="CCDS13377.1">
    <molecule id="Q969T3-1"/>
</dbReference>
<dbReference type="CCDS" id="CCDS42883.1">
    <molecule id="Q969T3-3"/>
</dbReference>
<dbReference type="RefSeq" id="NP_001036098.1">
    <molecule id="Q969T3-3"/>
    <property type="nucleotide sequence ID" value="NM_001042633.3"/>
</dbReference>
<dbReference type="RefSeq" id="NP_219489.1">
    <molecule id="Q969T3-1"/>
    <property type="nucleotide sequence ID" value="NM_033421.4"/>
</dbReference>
<dbReference type="RefSeq" id="NP_690857.1">
    <molecule id="Q969T3-2"/>
    <property type="nucleotide sequence ID" value="NM_152897.3"/>
</dbReference>
<dbReference type="SMR" id="Q969T3"/>
<dbReference type="BioGRID" id="124677">
    <property type="interactions" value="74"/>
</dbReference>
<dbReference type="FunCoup" id="Q969T3">
    <property type="interactions" value="170"/>
</dbReference>
<dbReference type="IntAct" id="Q969T3">
    <property type="interactions" value="63"/>
</dbReference>
<dbReference type="STRING" id="9606.ENSP00000418593"/>
<dbReference type="TCDB" id="3.A.34.1.1">
    <property type="family name" value="the sorting nexins of the escrt complexes (sn-escrt)"/>
</dbReference>
<dbReference type="GlyCosmos" id="Q969T3">
    <property type="glycosylation" value="1 site, 1 glycan"/>
</dbReference>
<dbReference type="GlyGen" id="Q969T3">
    <property type="glycosylation" value="2 sites, 1 O-linked glycan (1 site)"/>
</dbReference>
<dbReference type="iPTMnet" id="Q969T3"/>
<dbReference type="PhosphoSitePlus" id="Q969T3"/>
<dbReference type="BioMuta" id="SNX21"/>
<dbReference type="DMDM" id="20140138"/>
<dbReference type="jPOST" id="Q969T3"/>
<dbReference type="MassIVE" id="Q969T3"/>
<dbReference type="PaxDb" id="9606-ENSP00000418593"/>
<dbReference type="PeptideAtlas" id="Q969T3"/>
<dbReference type="ProteomicsDB" id="63536"/>
<dbReference type="ProteomicsDB" id="63537"/>
<dbReference type="ProteomicsDB" id="75842">
    <molecule id="Q969T3-1"/>
</dbReference>
<dbReference type="Pumba" id="Q969T3"/>
<dbReference type="Antibodypedia" id="27775">
    <property type="antibodies" value="82 antibodies from 16 providers"/>
</dbReference>
<dbReference type="DNASU" id="90203"/>
<dbReference type="Ensembl" id="ENST00000342644.9">
    <molecule id="Q969T3-2"/>
    <property type="protein sequence ID" value="ENSP00000344586.5"/>
    <property type="gene ID" value="ENSG00000124104.19"/>
</dbReference>
<dbReference type="Ensembl" id="ENST00000462307.5">
    <molecule id="Q969T3-3"/>
    <property type="protein sequence ID" value="ENSP00000420169.1"/>
    <property type="gene ID" value="ENSG00000124104.19"/>
</dbReference>
<dbReference type="Ensembl" id="ENST00000491381.6">
    <molecule id="Q969T3-1"/>
    <property type="protein sequence ID" value="ENSP00000418593.1"/>
    <property type="gene ID" value="ENSG00000124104.19"/>
</dbReference>
<dbReference type="GeneID" id="90203"/>
<dbReference type="KEGG" id="hsa:90203"/>
<dbReference type="MANE-Select" id="ENST00000491381.6">
    <property type="protein sequence ID" value="ENSP00000418593.1"/>
    <property type="RefSeq nucleotide sequence ID" value="NM_033421.4"/>
    <property type="RefSeq protein sequence ID" value="NP_219489.1"/>
</dbReference>
<dbReference type="UCSC" id="uc002xps.2">
    <molecule id="Q969T3-1"/>
    <property type="organism name" value="human"/>
</dbReference>
<dbReference type="AGR" id="HGNC:16154"/>
<dbReference type="CTD" id="90203"/>
<dbReference type="DisGeNET" id="90203"/>
<dbReference type="GeneCards" id="SNX21"/>
<dbReference type="HGNC" id="HGNC:16154">
    <property type="gene designation" value="SNX21"/>
</dbReference>
<dbReference type="HPA" id="ENSG00000124104">
    <property type="expression patterns" value="Low tissue specificity"/>
</dbReference>
<dbReference type="MIM" id="619200">
    <property type="type" value="gene"/>
</dbReference>
<dbReference type="neXtProt" id="NX_Q969T3"/>
<dbReference type="OpenTargets" id="ENSG00000124104"/>
<dbReference type="PharmGKB" id="PA25703"/>
<dbReference type="VEuPathDB" id="HostDB:ENSG00000124104"/>
<dbReference type="eggNOG" id="KOG2101">
    <property type="taxonomic scope" value="Eukaryota"/>
</dbReference>
<dbReference type="GeneTree" id="ENSGT00530000063759"/>
<dbReference type="InParanoid" id="Q969T3"/>
<dbReference type="OMA" id="DQMERVC"/>
<dbReference type="OrthoDB" id="5975050at2759"/>
<dbReference type="PAN-GO" id="Q969T3">
    <property type="GO annotations" value="2 GO annotations based on evolutionary models"/>
</dbReference>
<dbReference type="PhylomeDB" id="Q969T3"/>
<dbReference type="TreeFam" id="TF326807"/>
<dbReference type="PathwayCommons" id="Q969T3"/>
<dbReference type="SignaLink" id="Q969T3"/>
<dbReference type="BioGRID-ORCS" id="90203">
    <property type="hits" value="17 hits in 1158 CRISPR screens"/>
</dbReference>
<dbReference type="ChiTaRS" id="SNX21">
    <property type="organism name" value="human"/>
</dbReference>
<dbReference type="GeneWiki" id="SNX21"/>
<dbReference type="GenomeRNAi" id="90203"/>
<dbReference type="Pharos" id="Q969T3">
    <property type="development level" value="Tdark"/>
</dbReference>
<dbReference type="PRO" id="PR:Q969T3"/>
<dbReference type="Proteomes" id="UP000005640">
    <property type="component" value="Chromosome 20"/>
</dbReference>
<dbReference type="RNAct" id="Q969T3">
    <property type="molecule type" value="protein"/>
</dbReference>
<dbReference type="Bgee" id="ENSG00000124104">
    <property type="expression patterns" value="Expressed in skin of leg and 175 other cell types or tissues"/>
</dbReference>
<dbReference type="ExpressionAtlas" id="Q969T3">
    <property type="expression patterns" value="baseline and differential"/>
</dbReference>
<dbReference type="GO" id="GO:0031901">
    <property type="term" value="C:early endosome membrane"/>
    <property type="evidence" value="ECO:0000250"/>
    <property type="project" value="UniProtKB"/>
</dbReference>
<dbReference type="GO" id="GO:1901981">
    <property type="term" value="F:phosphatidylinositol phosphate binding"/>
    <property type="evidence" value="ECO:0000318"/>
    <property type="project" value="GO_Central"/>
</dbReference>
<dbReference type="GO" id="GO:0032266">
    <property type="term" value="F:phosphatidylinositol-3-phosphate binding"/>
    <property type="evidence" value="ECO:0000250"/>
    <property type="project" value="UniProtKB"/>
</dbReference>
<dbReference type="GO" id="GO:0005546">
    <property type="term" value="F:phosphatidylinositol-4,5-bisphosphate binding"/>
    <property type="evidence" value="ECO:0000250"/>
    <property type="project" value="UniProtKB"/>
</dbReference>
<dbReference type="GO" id="GO:0015031">
    <property type="term" value="P:protein transport"/>
    <property type="evidence" value="ECO:0007669"/>
    <property type="project" value="UniProtKB-KW"/>
</dbReference>
<dbReference type="CDD" id="cd07301">
    <property type="entry name" value="PX_SNX21"/>
    <property type="match status" value="1"/>
</dbReference>
<dbReference type="FunFam" id="3.30.1520.10:FF:000025">
    <property type="entry name" value="Sorting nexin 20"/>
    <property type="match status" value="1"/>
</dbReference>
<dbReference type="FunFam" id="1.25.40.10:FF:000499">
    <property type="entry name" value="sorting nexin-21 isoform X1"/>
    <property type="match status" value="1"/>
</dbReference>
<dbReference type="Gene3D" id="3.30.1520.10">
    <property type="entry name" value="Phox-like domain"/>
    <property type="match status" value="1"/>
</dbReference>
<dbReference type="Gene3D" id="1.25.40.10">
    <property type="entry name" value="Tetratricopeptide repeat domain"/>
    <property type="match status" value="1"/>
</dbReference>
<dbReference type="InterPro" id="IPR001683">
    <property type="entry name" value="PX_dom"/>
</dbReference>
<dbReference type="InterPro" id="IPR036871">
    <property type="entry name" value="PX_dom_sf"/>
</dbReference>
<dbReference type="InterPro" id="IPR039937">
    <property type="entry name" value="SNX20/SNX21"/>
</dbReference>
<dbReference type="InterPro" id="IPR011990">
    <property type="entry name" value="TPR-like_helical_dom_sf"/>
</dbReference>
<dbReference type="PANTHER" id="PTHR20939">
    <property type="entry name" value="SORTING NEXIN 20, 21"/>
    <property type="match status" value="1"/>
</dbReference>
<dbReference type="PANTHER" id="PTHR20939:SF10">
    <property type="entry name" value="SORTING NEXIN-21"/>
    <property type="match status" value="1"/>
</dbReference>
<dbReference type="Pfam" id="PF00787">
    <property type="entry name" value="PX"/>
    <property type="match status" value="1"/>
</dbReference>
<dbReference type="SMART" id="SM00312">
    <property type="entry name" value="PX"/>
    <property type="match status" value="1"/>
</dbReference>
<dbReference type="SUPFAM" id="SSF64268">
    <property type="entry name" value="PX domain"/>
    <property type="match status" value="1"/>
</dbReference>
<dbReference type="SUPFAM" id="SSF48452">
    <property type="entry name" value="TPR-like"/>
    <property type="match status" value="1"/>
</dbReference>
<dbReference type="PROSITE" id="PS50195">
    <property type="entry name" value="PX"/>
    <property type="match status" value="1"/>
</dbReference>
<name>SNX21_HUMAN</name>
<sequence>MHRGTQEGAMASRLLHRLRHALAGDGPGEAAASPEAEQFPESSELEDDDAEGLSSRLSGTLSFTSAEDDEDDEDEDDEEAGPDQLPLGDGTSGEDAERSPPPDGQWGSQLLARQLQDFWKKSRNTLAPQRLLFEVTSANVVKDPPSKYVLYTLAVIGPGPPDCQPAQISRRYSDFERLHRNLQRQFRGPMAAISFPRKRLRRNFTAETIARRSRAFEQFLGHLQAVPELRHAPDLQDFFVLPELRRAQSLTCTGLYREALALWANAWQLQAQLGTPSGPDRPLLTLAGLAVCHQELEDPGEARACCEKALQLLGDKSLHPLLAPFLEAHVRLSWRLGLDKRQSEARLQALQEAGLTPTPPPSLKELLIKEVLD</sequence>
<accession>Q969T3</accession>
<accession>Q5JZH5</accession>
<accession>Q5JZH6</accession>
<accession>Q5JZH7</accession>
<accession>Q8WUR6</accession>
<accession>Q9BR16</accession>
<keyword id="KW-0025">Alternative splicing</keyword>
<keyword id="KW-0968">Cytoplasmic vesicle</keyword>
<keyword id="KW-0967">Endosome</keyword>
<keyword id="KW-0446">Lipid-binding</keyword>
<keyword id="KW-0472">Membrane</keyword>
<keyword id="KW-0653">Protein transport</keyword>
<keyword id="KW-1267">Proteomics identification</keyword>
<keyword id="KW-1185">Reference proteome</keyword>
<keyword id="KW-0813">Transport</keyword>
<comment type="function">
    <text evidence="2">Binds to membranes enriched in phosphatidylinositol 3-phosphate (PtdIns(P3)) and phosphatidylinositol 4,5-bisphosphate. May be involved in several stages of intracellular trafficking.</text>
</comment>
<comment type="subunit">
    <text evidence="2">Monomer.</text>
</comment>
<comment type="interaction">
    <interactant intactId="EBI-12142321">
        <id>Q969T3-2</id>
    </interactant>
    <interactant intactId="EBI-7116203">
        <id>O75031</id>
        <label>HSF2BP</label>
    </interactant>
    <organismsDiffer>false</organismsDiffer>
    <experiments>3</experiments>
</comment>
<comment type="subcellular location">
    <subcellularLocation>
        <location evidence="2">Cytoplasmic vesicle membrane</location>
        <topology evidence="1">Peripheral membrane protein</topology>
        <orientation evidence="1">Cytoplasmic side</orientation>
    </subcellularLocation>
    <subcellularLocation>
        <location evidence="2">Early endosome membrane</location>
        <topology evidence="2">Peripheral membrane protein</topology>
        <orientation evidence="2">Cytoplasmic side</orientation>
    </subcellularLocation>
</comment>
<comment type="alternative products">
    <event type="alternative splicing"/>
    <isoform>
        <id>Q969T3-1</id>
        <name>1</name>
        <sequence type="displayed"/>
    </isoform>
    <isoform>
        <id>Q969T3-2</id>
        <name>2</name>
        <sequence type="described" ref="VSP_045048 VSP_045049"/>
    </isoform>
    <isoform>
        <id>Q969T3-3</id>
        <name>3</name>
        <sequence type="described" ref="VSP_047115"/>
    </isoform>
</comment>
<comment type="tissue specificity">
    <text evidence="7">Highly expressed in fetus liver, but only weakly expressed in brain, skeleton muscle, smooth muscle, and cardiac muscle, kidney, and adrenal gland.</text>
</comment>
<comment type="domain">
    <text evidence="2">The PX domain mediates specific binding to membranes enriched in phosphatidylinositol 3-phosphate (PtdIns(P3)).</text>
</comment>
<comment type="similarity">
    <text evidence="11">Belongs to the sorting nexin family.</text>
</comment>
<organism>
    <name type="scientific">Homo sapiens</name>
    <name type="common">Human</name>
    <dbReference type="NCBI Taxonomy" id="9606"/>
    <lineage>
        <taxon>Eukaryota</taxon>
        <taxon>Metazoa</taxon>
        <taxon>Chordata</taxon>
        <taxon>Craniata</taxon>
        <taxon>Vertebrata</taxon>
        <taxon>Euteleostomi</taxon>
        <taxon>Mammalia</taxon>
        <taxon>Eutheria</taxon>
        <taxon>Euarchontoglires</taxon>
        <taxon>Primates</taxon>
        <taxon>Haplorrhini</taxon>
        <taxon>Catarrhini</taxon>
        <taxon>Hominidae</taxon>
        <taxon>Homo</taxon>
    </lineage>
</organism>
<protein>
    <recommendedName>
        <fullName>Sorting nexin-21</fullName>
    </recommendedName>
    <alternativeName>
        <fullName>Sorting nexin L</fullName>
        <shortName evidence="9">SNX-L</shortName>
    </alternativeName>
</protein>
<proteinExistence type="evidence at protein level"/>
<evidence type="ECO:0000250" key="1"/>
<evidence type="ECO:0000250" key="2">
    <source>
        <dbReference type="UniProtKB" id="Q3UR97"/>
    </source>
</evidence>
<evidence type="ECO:0000250" key="3">
    <source>
        <dbReference type="UniProtKB" id="Q6P4T1"/>
    </source>
</evidence>
<evidence type="ECO:0000250" key="4">
    <source>
        <dbReference type="UniProtKB" id="Q96L94"/>
    </source>
</evidence>
<evidence type="ECO:0000255" key="5">
    <source>
        <dbReference type="PROSITE-ProRule" id="PRU00147"/>
    </source>
</evidence>
<evidence type="ECO:0000256" key="6">
    <source>
        <dbReference type="SAM" id="MobiDB-lite"/>
    </source>
</evidence>
<evidence type="ECO:0000269" key="7">
    <source>
    </source>
</evidence>
<evidence type="ECO:0000269" key="8">
    <source>
    </source>
</evidence>
<evidence type="ECO:0000303" key="9">
    <source>
    </source>
</evidence>
<evidence type="ECO:0000303" key="10">
    <source>
    </source>
</evidence>
<evidence type="ECO:0000305" key="11"/>
<gene>
    <name type="primary">SNX21</name>
    <name type="synonym">C20orf161</name>
    <name type="synonym">SNXL</name>
</gene>
<reference key="1">
    <citation type="submission" date="2001-06" db="EMBL/GenBank/DDBJ databases">
        <title>A new member (SNX21) of the sorting nexin protein family.</title>
        <authorList>
            <person name="Hong W."/>
        </authorList>
    </citation>
    <scope>NUCLEOTIDE SEQUENCE [MRNA] (ISOFORM 1)</scope>
</reference>
<reference key="2">
    <citation type="journal article" date="2002" name="Biochem. Biophys. Res. Commun.">
        <title>Expression of a novel member of sorting nexin gene family, SNX-L, in human liver development.</title>
        <authorList>
            <person name="Zeng W."/>
            <person name="Yuan W."/>
            <person name="Wang Y."/>
            <person name="Jiao W."/>
            <person name="Zhu Y."/>
            <person name="Huang C."/>
            <person name="Li D."/>
            <person name="Li Y."/>
            <person name="Zhu C."/>
            <person name="Wu X."/>
            <person name="Liu M."/>
        </authorList>
    </citation>
    <scope>NUCLEOTIDE SEQUENCE [MRNA] (ISOFORM 1)</scope>
    <scope>TISSUE SPECIFICITY</scope>
</reference>
<reference key="3">
    <citation type="submission" date="2001-05" db="EMBL/GenBank/DDBJ databases">
        <authorList>
            <person name="Stavrides G.S."/>
            <person name="Huckle E.J."/>
            <person name="Deloukas P."/>
        </authorList>
    </citation>
    <scope>NUCLEOTIDE SEQUENCE [MRNA] (ISOFORM 1)</scope>
</reference>
<reference key="4">
    <citation type="journal article" date="2001" name="Nature">
        <title>The DNA sequence and comparative analysis of human chromosome 20.</title>
        <authorList>
            <person name="Deloukas P."/>
            <person name="Matthews L.H."/>
            <person name="Ashurst J.L."/>
            <person name="Burton J."/>
            <person name="Gilbert J.G.R."/>
            <person name="Jones M."/>
            <person name="Stavrides G."/>
            <person name="Almeida J.P."/>
            <person name="Babbage A.K."/>
            <person name="Bagguley C.L."/>
            <person name="Bailey J."/>
            <person name="Barlow K.F."/>
            <person name="Bates K.N."/>
            <person name="Beard L.M."/>
            <person name="Beare D.M."/>
            <person name="Beasley O.P."/>
            <person name="Bird C.P."/>
            <person name="Blakey S.E."/>
            <person name="Bridgeman A.M."/>
            <person name="Brown A.J."/>
            <person name="Buck D."/>
            <person name="Burrill W.D."/>
            <person name="Butler A.P."/>
            <person name="Carder C."/>
            <person name="Carter N.P."/>
            <person name="Chapman J.C."/>
            <person name="Clamp M."/>
            <person name="Clark G."/>
            <person name="Clark L.N."/>
            <person name="Clark S.Y."/>
            <person name="Clee C.M."/>
            <person name="Clegg S."/>
            <person name="Cobley V.E."/>
            <person name="Collier R.E."/>
            <person name="Connor R.E."/>
            <person name="Corby N.R."/>
            <person name="Coulson A."/>
            <person name="Coville G.J."/>
            <person name="Deadman R."/>
            <person name="Dhami P.D."/>
            <person name="Dunn M."/>
            <person name="Ellington A.G."/>
            <person name="Frankland J.A."/>
            <person name="Fraser A."/>
            <person name="French L."/>
            <person name="Garner P."/>
            <person name="Grafham D.V."/>
            <person name="Griffiths C."/>
            <person name="Griffiths M.N.D."/>
            <person name="Gwilliam R."/>
            <person name="Hall R.E."/>
            <person name="Hammond S."/>
            <person name="Harley J.L."/>
            <person name="Heath P.D."/>
            <person name="Ho S."/>
            <person name="Holden J.L."/>
            <person name="Howden P.J."/>
            <person name="Huckle E."/>
            <person name="Hunt A.R."/>
            <person name="Hunt S.E."/>
            <person name="Jekosch K."/>
            <person name="Johnson C.M."/>
            <person name="Johnson D."/>
            <person name="Kay M.P."/>
            <person name="Kimberley A.M."/>
            <person name="King A."/>
            <person name="Knights A."/>
            <person name="Laird G.K."/>
            <person name="Lawlor S."/>
            <person name="Lehvaeslaiho M.H."/>
            <person name="Leversha M.A."/>
            <person name="Lloyd C."/>
            <person name="Lloyd D.M."/>
            <person name="Lovell J.D."/>
            <person name="Marsh V.L."/>
            <person name="Martin S.L."/>
            <person name="McConnachie L.J."/>
            <person name="McLay K."/>
            <person name="McMurray A.A."/>
            <person name="Milne S.A."/>
            <person name="Mistry D."/>
            <person name="Moore M.J.F."/>
            <person name="Mullikin J.C."/>
            <person name="Nickerson T."/>
            <person name="Oliver K."/>
            <person name="Parker A."/>
            <person name="Patel R."/>
            <person name="Pearce T.A.V."/>
            <person name="Peck A.I."/>
            <person name="Phillimore B.J.C.T."/>
            <person name="Prathalingam S.R."/>
            <person name="Plumb R.W."/>
            <person name="Ramsay H."/>
            <person name="Rice C.M."/>
            <person name="Ross M.T."/>
            <person name="Scott C.E."/>
            <person name="Sehra H.K."/>
            <person name="Shownkeen R."/>
            <person name="Sims S."/>
            <person name="Skuce C.D."/>
            <person name="Smith M.L."/>
            <person name="Soderlund C."/>
            <person name="Steward C.A."/>
            <person name="Sulston J.E."/>
            <person name="Swann R.M."/>
            <person name="Sycamore N."/>
            <person name="Taylor R."/>
            <person name="Tee L."/>
            <person name="Thomas D.W."/>
            <person name="Thorpe A."/>
            <person name="Tracey A."/>
            <person name="Tromans A.C."/>
            <person name="Vaudin M."/>
            <person name="Wall M."/>
            <person name="Wallis J.M."/>
            <person name="Whitehead S.L."/>
            <person name="Whittaker P."/>
            <person name="Willey D.L."/>
            <person name="Williams L."/>
            <person name="Williams S.A."/>
            <person name="Wilming L."/>
            <person name="Wray P.W."/>
            <person name="Hubbard T."/>
            <person name="Durbin R.M."/>
            <person name="Bentley D.R."/>
            <person name="Beck S."/>
            <person name="Rogers J."/>
        </authorList>
    </citation>
    <scope>NUCLEOTIDE SEQUENCE [LARGE SCALE GENOMIC DNA]</scope>
</reference>
<reference key="5">
    <citation type="journal article" date="2004" name="Genome Res.">
        <title>The status, quality, and expansion of the NIH full-length cDNA project: the Mammalian Gene Collection (MGC).</title>
        <authorList>
            <consortium name="The MGC Project Team"/>
        </authorList>
    </citation>
    <scope>NUCLEOTIDE SEQUENCE [LARGE SCALE MRNA] (ISOFORM 2)</scope>
    <scope>VARIANT THR-154</scope>
    <source>
        <tissue>Kidney</tissue>
    </source>
</reference>
<feature type="chain" id="PRO_0000213870" description="Sorting nexin-21">
    <location>
        <begin position="1"/>
        <end position="373"/>
    </location>
</feature>
<feature type="domain" description="PX" evidence="5">
    <location>
        <begin position="129"/>
        <end position="246"/>
    </location>
</feature>
<feature type="region of interest" description="Disordered" evidence="6">
    <location>
        <begin position="1"/>
        <end position="107"/>
    </location>
</feature>
<feature type="compositionally biased region" description="Low complexity" evidence="6">
    <location>
        <begin position="21"/>
        <end position="37"/>
    </location>
</feature>
<feature type="compositionally biased region" description="Polar residues" evidence="6">
    <location>
        <begin position="55"/>
        <end position="65"/>
    </location>
</feature>
<feature type="compositionally biased region" description="Acidic residues" evidence="6">
    <location>
        <begin position="66"/>
        <end position="81"/>
    </location>
</feature>
<feature type="binding site" evidence="3">
    <location>
        <position position="171"/>
    </location>
    <ligand>
        <name>a 1,2-diacyl-sn-glycero-3-phospho-(1D-myo-inositol-3-phosphate)</name>
        <dbReference type="ChEBI" id="CHEBI:58088"/>
    </ligand>
</feature>
<feature type="binding site" evidence="4">
    <location>
        <position position="173"/>
    </location>
    <ligand>
        <name>a 1,2-diacyl-sn-glycero-3-phospho-(1D-myo-inositol-3-phosphate)</name>
        <dbReference type="ChEBI" id="CHEBI:58088"/>
    </ligand>
</feature>
<feature type="binding site" evidence="4">
    <location>
        <position position="198"/>
    </location>
    <ligand>
        <name>a 1,2-diacyl-sn-glycero-3-phospho-(1D-myo-inositol-3-phosphate)</name>
        <dbReference type="ChEBI" id="CHEBI:58088"/>
    </ligand>
</feature>
<feature type="binding site" evidence="3">
    <location>
        <position position="212"/>
    </location>
    <ligand>
        <name>a 1,2-diacyl-sn-glycero-3-phospho-(1D-myo-inositol-3-phosphate)</name>
        <dbReference type="ChEBI" id="CHEBI:58088"/>
    </ligand>
</feature>
<feature type="splice variant" id="VSP_047115" description="In isoform 3." evidence="11">
    <original>LYTLAVIGPGPPDCQPAQISRRYSDFERLHRNLQRQFRGPMAAISFPRKRLRRNFTAETIARRSRAFEQFLGHLQAVPELRHAPDLQDFFVLPELRRAQSLTCTGLYREALALWANAWQLQAQLGTPSGPDRPLLTLAGLAVCHQELEDPGEARACCEKALQLLGDKSLHPLLAPFLEAHVRLSWRLGLDKRQSEARLQALQEAGLTPTPPPSLKELLIKEVLD</original>
    <variation>TNLSSTPSP</variation>
    <location>
        <begin position="150"/>
        <end position="373"/>
    </location>
</feature>
<feature type="splice variant" id="VSP_045048" description="In isoform 2." evidence="10">
    <original>RKR</original>
    <variation>QSH</variation>
    <location>
        <begin position="197"/>
        <end position="199"/>
    </location>
</feature>
<feature type="splice variant" id="VSP_045049" description="In isoform 2." evidence="10">
    <location>
        <begin position="200"/>
        <end position="373"/>
    </location>
</feature>
<feature type="sequence variant" id="VAR_052482" description="In dbSNP:rs4638862." evidence="8">
    <original>A</original>
    <variation>T</variation>
    <location>
        <position position="154"/>
    </location>
</feature>